<dbReference type="EMBL" id="AF211119">
    <property type="protein sequence ID" value="AAF22974.1"/>
    <property type="molecule type" value="mRNA"/>
</dbReference>
<dbReference type="EMBL" id="AL449423">
    <property type="status" value="NOT_ANNOTATED_CDS"/>
    <property type="molecule type" value="Genomic_DNA"/>
</dbReference>
<dbReference type="EMBL" id="AC000048">
    <property type="status" value="NOT_ANNOTATED_CDS"/>
    <property type="molecule type" value="Genomic_DNA"/>
</dbReference>
<dbReference type="BioMuta" id="HGNC:23831"/>
<dbReference type="jPOST" id="Q9UH64"/>
<dbReference type="AGR" id="HGNC:23831"/>
<dbReference type="GeneCards" id="CDKN2A-AS1"/>
<dbReference type="HGNC" id="HGNC:23831">
    <property type="gene designation" value="CDKN2A-AS1"/>
</dbReference>
<dbReference type="neXtProt" id="NX_Q9UH64"/>
<dbReference type="InParanoid" id="Q9UH64"/>
<dbReference type="PAN-GO" id="Q9UH64">
    <property type="GO annotations" value="0 GO annotations based on evolutionary models"/>
</dbReference>
<dbReference type="PhylomeDB" id="Q9UH64"/>
<dbReference type="Pharos" id="Q9UH64">
    <property type="development level" value="Tdark"/>
</dbReference>
<dbReference type="Proteomes" id="UP000005640">
    <property type="component" value="Unplaced"/>
</dbReference>
<dbReference type="RNAct" id="Q9UH64">
    <property type="molecule type" value="protein"/>
</dbReference>
<reference key="1">
    <citation type="submission" date="1999-12" db="EMBL/GenBank/DDBJ databases">
        <title>A new nasopharyngeal carcinoma associated gene on 9p21-22.</title>
        <authorList>
            <person name="Jun Q."/>
            <person name="Yang J.B."/>
            <person name="Li G.Y."/>
        </authorList>
    </citation>
    <scope>NUCLEOTIDE SEQUENCE [MRNA]</scope>
    <source>
        <tissue>Nasopharyngeal carcinoma</tissue>
    </source>
</reference>
<reference key="2">
    <citation type="journal article" date="2004" name="Nature">
        <title>DNA sequence and analysis of human chromosome 9.</title>
        <authorList>
            <person name="Humphray S.J."/>
            <person name="Oliver K."/>
            <person name="Hunt A.R."/>
            <person name="Plumb R.W."/>
            <person name="Loveland J.E."/>
            <person name="Howe K.L."/>
            <person name="Andrews T.D."/>
            <person name="Searle S."/>
            <person name="Hunt S.E."/>
            <person name="Scott C.E."/>
            <person name="Jones M.C."/>
            <person name="Ainscough R."/>
            <person name="Almeida J.P."/>
            <person name="Ambrose K.D."/>
            <person name="Ashwell R.I.S."/>
            <person name="Babbage A.K."/>
            <person name="Babbage S."/>
            <person name="Bagguley C.L."/>
            <person name="Bailey J."/>
            <person name="Banerjee R."/>
            <person name="Barker D.J."/>
            <person name="Barlow K.F."/>
            <person name="Bates K."/>
            <person name="Beasley H."/>
            <person name="Beasley O."/>
            <person name="Bird C.P."/>
            <person name="Bray-Allen S."/>
            <person name="Brown A.J."/>
            <person name="Brown J.Y."/>
            <person name="Burford D."/>
            <person name="Burrill W."/>
            <person name="Burton J."/>
            <person name="Carder C."/>
            <person name="Carter N.P."/>
            <person name="Chapman J.C."/>
            <person name="Chen Y."/>
            <person name="Clarke G."/>
            <person name="Clark S.Y."/>
            <person name="Clee C.M."/>
            <person name="Clegg S."/>
            <person name="Collier R.E."/>
            <person name="Corby N."/>
            <person name="Crosier M."/>
            <person name="Cummings A.T."/>
            <person name="Davies J."/>
            <person name="Dhami P."/>
            <person name="Dunn M."/>
            <person name="Dutta I."/>
            <person name="Dyer L.W."/>
            <person name="Earthrowl M.E."/>
            <person name="Faulkner L."/>
            <person name="Fleming C.J."/>
            <person name="Frankish A."/>
            <person name="Frankland J.A."/>
            <person name="French L."/>
            <person name="Fricker D.G."/>
            <person name="Garner P."/>
            <person name="Garnett J."/>
            <person name="Ghori J."/>
            <person name="Gilbert J.G.R."/>
            <person name="Glison C."/>
            <person name="Grafham D.V."/>
            <person name="Gribble S."/>
            <person name="Griffiths C."/>
            <person name="Griffiths-Jones S."/>
            <person name="Grocock R."/>
            <person name="Guy J."/>
            <person name="Hall R.E."/>
            <person name="Hammond S."/>
            <person name="Harley J.L."/>
            <person name="Harrison E.S.I."/>
            <person name="Hart E.A."/>
            <person name="Heath P.D."/>
            <person name="Henderson C.D."/>
            <person name="Hopkins B.L."/>
            <person name="Howard P.J."/>
            <person name="Howden P.J."/>
            <person name="Huckle E."/>
            <person name="Johnson C."/>
            <person name="Johnson D."/>
            <person name="Joy A.A."/>
            <person name="Kay M."/>
            <person name="Keenan S."/>
            <person name="Kershaw J.K."/>
            <person name="Kimberley A.M."/>
            <person name="King A."/>
            <person name="Knights A."/>
            <person name="Laird G.K."/>
            <person name="Langford C."/>
            <person name="Lawlor S."/>
            <person name="Leongamornlert D.A."/>
            <person name="Leversha M."/>
            <person name="Lloyd C."/>
            <person name="Lloyd D.M."/>
            <person name="Lovell J."/>
            <person name="Martin S."/>
            <person name="Mashreghi-Mohammadi M."/>
            <person name="Matthews L."/>
            <person name="McLaren S."/>
            <person name="McLay K.E."/>
            <person name="McMurray A."/>
            <person name="Milne S."/>
            <person name="Nickerson T."/>
            <person name="Nisbett J."/>
            <person name="Nordsiek G."/>
            <person name="Pearce A.V."/>
            <person name="Peck A.I."/>
            <person name="Porter K.M."/>
            <person name="Pandian R."/>
            <person name="Pelan S."/>
            <person name="Phillimore B."/>
            <person name="Povey S."/>
            <person name="Ramsey Y."/>
            <person name="Rand V."/>
            <person name="Scharfe M."/>
            <person name="Sehra H.K."/>
            <person name="Shownkeen R."/>
            <person name="Sims S.K."/>
            <person name="Skuce C.D."/>
            <person name="Smith M."/>
            <person name="Steward C.A."/>
            <person name="Swarbreck D."/>
            <person name="Sycamore N."/>
            <person name="Tester J."/>
            <person name="Thorpe A."/>
            <person name="Tracey A."/>
            <person name="Tromans A."/>
            <person name="Thomas D.W."/>
            <person name="Wall M."/>
            <person name="Wallis J.M."/>
            <person name="West A.P."/>
            <person name="Whitehead S.L."/>
            <person name="Willey D.L."/>
            <person name="Williams S.A."/>
            <person name="Wilming L."/>
            <person name="Wray P.W."/>
            <person name="Young L."/>
            <person name="Ashurst J.L."/>
            <person name="Coulson A."/>
            <person name="Blocker H."/>
            <person name="Durbin R.M."/>
            <person name="Sulston J.E."/>
            <person name="Hubbard T."/>
            <person name="Jackson M.J."/>
            <person name="Bentley D.R."/>
            <person name="Beck S."/>
            <person name="Rogers J."/>
            <person name="Dunham I."/>
        </authorList>
    </citation>
    <scope>NUCLEOTIDE SEQUENCE [LARGE SCALE GENOMIC DNA]</scope>
</reference>
<gene>
    <name evidence="4" type="primary">CDKN2A-AS1</name>
    <name evidence="4" type="synonym">C9orf53</name>
    <name evidence="4" type="synonym">CDKN2A-DT</name>
</gene>
<organism>
    <name type="scientific">Homo sapiens</name>
    <name type="common">Human</name>
    <dbReference type="NCBI Taxonomy" id="9606"/>
    <lineage>
        <taxon>Eukaryota</taxon>
        <taxon>Metazoa</taxon>
        <taxon>Chordata</taxon>
        <taxon>Craniata</taxon>
        <taxon>Vertebrata</taxon>
        <taxon>Euteleostomi</taxon>
        <taxon>Mammalia</taxon>
        <taxon>Eutheria</taxon>
        <taxon>Euarchontoglires</taxon>
        <taxon>Primates</taxon>
        <taxon>Haplorrhini</taxon>
        <taxon>Catarrhini</taxon>
        <taxon>Hominidae</taxon>
        <taxon>Homo</taxon>
    </lineage>
</organism>
<comment type="caution">
    <text evidence="2">Product of a dubious CDS prediction. May be a long non-coding RNA.</text>
</comment>
<protein>
    <recommendedName>
        <fullName evidence="4">Putative uncharacterized protein CDKN2A-AS1</fullName>
    </recommendedName>
    <alternativeName>
        <fullName evidence="4">CDKN2A antisense RNA 1</fullName>
    </alternativeName>
    <alternativeName>
        <fullName evidence="2">CDKN2A antisense gene protein 1</fullName>
    </alternativeName>
    <alternativeName>
        <fullName evidence="2">Protein CDKN2A-DT</fullName>
    </alternativeName>
    <alternativeName>
        <fullName evidence="3">Susceptibility protein NSG-x</fullName>
    </alternativeName>
</protein>
<name>NSGX_HUMAN</name>
<proteinExistence type="uncertain"/>
<evidence type="ECO:0000256" key="1">
    <source>
        <dbReference type="SAM" id="MobiDB-lite"/>
    </source>
</evidence>
<evidence type="ECO:0000305" key="2"/>
<evidence type="ECO:0000312" key="3">
    <source>
        <dbReference type="EMBL" id="AAF22974.1"/>
    </source>
</evidence>
<evidence type="ECO:0000312" key="4">
    <source>
        <dbReference type="HGNC" id="HGNC:23831"/>
    </source>
</evidence>
<accession>Q9UH64</accession>
<accession>Q5VVJ4</accession>
<feature type="chain" id="PRO_0000057964" description="Putative uncharacterized protein CDKN2A-AS1">
    <location>
        <begin position="1"/>
        <end position="79"/>
    </location>
</feature>
<feature type="region of interest" description="Disordered" evidence="1">
    <location>
        <begin position="1"/>
        <end position="27"/>
    </location>
</feature>
<sequence>MRQRGQEHLPTSVKSEPRACNNPTVAENRRVPSGLAAVIRNLTALWNPSLGVSERRGGDWEPSRIPRLWARVGWIQLPG</sequence>
<keyword id="KW-1185">Reference proteome</keyword>